<feature type="chain" id="PRO_0000325657" description="Uroporphyrinogen decarboxylase">
    <location>
        <begin position="1"/>
        <end position="343"/>
    </location>
</feature>
<feature type="binding site" evidence="1">
    <location>
        <begin position="25"/>
        <end position="29"/>
    </location>
    <ligand>
        <name>substrate</name>
    </ligand>
</feature>
<feature type="binding site" evidence="1">
    <location>
        <position position="75"/>
    </location>
    <ligand>
        <name>substrate</name>
    </ligand>
</feature>
<feature type="binding site" evidence="1">
    <location>
        <position position="152"/>
    </location>
    <ligand>
        <name>substrate</name>
    </ligand>
</feature>
<feature type="binding site" evidence="1">
    <location>
        <position position="207"/>
    </location>
    <ligand>
        <name>substrate</name>
    </ligand>
</feature>
<feature type="binding site" evidence="1">
    <location>
        <position position="323"/>
    </location>
    <ligand>
        <name>substrate</name>
    </ligand>
</feature>
<feature type="site" description="Transition state stabilizer" evidence="1">
    <location>
        <position position="75"/>
    </location>
</feature>
<proteinExistence type="inferred from homology"/>
<dbReference type="EC" id="4.1.1.37" evidence="1"/>
<dbReference type="EMBL" id="CP000264">
    <property type="protein sequence ID" value="ABD56763.1"/>
    <property type="molecule type" value="Genomic_DNA"/>
</dbReference>
<dbReference type="RefSeq" id="WP_011456960.1">
    <property type="nucleotide sequence ID" value="NC_007802.1"/>
</dbReference>
<dbReference type="SMR" id="Q28KJ9"/>
<dbReference type="STRING" id="290400.Jann_3846"/>
<dbReference type="KEGG" id="jan:Jann_3846"/>
<dbReference type="eggNOG" id="COG0407">
    <property type="taxonomic scope" value="Bacteria"/>
</dbReference>
<dbReference type="HOGENOM" id="CLU_040933_0_0_5"/>
<dbReference type="OrthoDB" id="9806656at2"/>
<dbReference type="UniPathway" id="UPA00251">
    <property type="reaction ID" value="UER00321"/>
</dbReference>
<dbReference type="Proteomes" id="UP000008326">
    <property type="component" value="Chromosome"/>
</dbReference>
<dbReference type="GO" id="GO:0005829">
    <property type="term" value="C:cytosol"/>
    <property type="evidence" value="ECO:0007669"/>
    <property type="project" value="TreeGrafter"/>
</dbReference>
<dbReference type="GO" id="GO:0004853">
    <property type="term" value="F:uroporphyrinogen decarboxylase activity"/>
    <property type="evidence" value="ECO:0007669"/>
    <property type="project" value="UniProtKB-UniRule"/>
</dbReference>
<dbReference type="GO" id="GO:0019353">
    <property type="term" value="P:protoporphyrinogen IX biosynthetic process from glutamate"/>
    <property type="evidence" value="ECO:0007669"/>
    <property type="project" value="TreeGrafter"/>
</dbReference>
<dbReference type="CDD" id="cd00717">
    <property type="entry name" value="URO-D"/>
    <property type="match status" value="1"/>
</dbReference>
<dbReference type="Gene3D" id="3.20.20.210">
    <property type="match status" value="1"/>
</dbReference>
<dbReference type="HAMAP" id="MF_00218">
    <property type="entry name" value="URO_D"/>
    <property type="match status" value="1"/>
</dbReference>
<dbReference type="InterPro" id="IPR038071">
    <property type="entry name" value="UROD/MetE-like_sf"/>
</dbReference>
<dbReference type="InterPro" id="IPR006361">
    <property type="entry name" value="Uroporphyrinogen_deCO2ase_HemE"/>
</dbReference>
<dbReference type="InterPro" id="IPR000257">
    <property type="entry name" value="Uroporphyrinogen_deCOase"/>
</dbReference>
<dbReference type="NCBIfam" id="TIGR01464">
    <property type="entry name" value="hemE"/>
    <property type="match status" value="1"/>
</dbReference>
<dbReference type="PANTHER" id="PTHR21091">
    <property type="entry name" value="METHYLTETRAHYDROFOLATE:HOMOCYSTEINE METHYLTRANSFERASE RELATED"/>
    <property type="match status" value="1"/>
</dbReference>
<dbReference type="PANTHER" id="PTHR21091:SF169">
    <property type="entry name" value="UROPORPHYRINOGEN DECARBOXYLASE"/>
    <property type="match status" value="1"/>
</dbReference>
<dbReference type="Pfam" id="PF01208">
    <property type="entry name" value="URO-D"/>
    <property type="match status" value="1"/>
</dbReference>
<dbReference type="SUPFAM" id="SSF51726">
    <property type="entry name" value="UROD/MetE-like"/>
    <property type="match status" value="1"/>
</dbReference>
<dbReference type="PROSITE" id="PS00906">
    <property type="entry name" value="UROD_1"/>
    <property type="match status" value="1"/>
</dbReference>
<dbReference type="PROSITE" id="PS00907">
    <property type="entry name" value="UROD_2"/>
    <property type="match status" value="1"/>
</dbReference>
<organism>
    <name type="scientific">Jannaschia sp. (strain CCS1)</name>
    <dbReference type="NCBI Taxonomy" id="290400"/>
    <lineage>
        <taxon>Bacteria</taxon>
        <taxon>Pseudomonadati</taxon>
        <taxon>Pseudomonadota</taxon>
        <taxon>Alphaproteobacteria</taxon>
        <taxon>Rhodobacterales</taxon>
        <taxon>Roseobacteraceae</taxon>
        <taxon>Jannaschia</taxon>
    </lineage>
</organism>
<accession>Q28KJ9</accession>
<protein>
    <recommendedName>
        <fullName evidence="1">Uroporphyrinogen decarboxylase</fullName>
        <shortName evidence="1">UPD</shortName>
        <shortName evidence="1">URO-D</shortName>
        <ecNumber evidence="1">4.1.1.37</ecNumber>
    </recommendedName>
</protein>
<name>DCUP_JANSC</name>
<sequence length="343" mass="37315">MADKKKLLRSLAGEAMDVPPVWLMRQAGRYLPEYRATRAQAGDFLSLCYNPELAAEVTLQPIRRFDFDASILFADILLIPQALGANLWFVTGEGPRLSTITDASGMARMKTADDIHETLNPIYETVKILAQELPKETTLIGFAGAPWTVATYMIAGRGTPDQAPAHKLREGDPETFDKLMDLITAATIEYLDMQVQAGAEVVKLFDSWAGSLKGEAFDKYALAPAKRIISELKSRHPDLPIIAFPREAGEKYIGFANAVGADCLAIDTSVDAIWAAENLQTDGCVQGNLDPKLMVTGGEALASEARRIRDALKGGPHIFNLGHGITPDADPENVHILLDAIRS</sequence>
<gene>
    <name evidence="1" type="primary">hemE</name>
    <name type="ordered locus">Jann_3846</name>
</gene>
<comment type="function">
    <text evidence="1">Catalyzes the decarboxylation of four acetate groups of uroporphyrinogen-III to yield coproporphyrinogen-III.</text>
</comment>
<comment type="catalytic activity">
    <reaction evidence="1">
        <text>uroporphyrinogen III + 4 H(+) = coproporphyrinogen III + 4 CO2</text>
        <dbReference type="Rhea" id="RHEA:19865"/>
        <dbReference type="ChEBI" id="CHEBI:15378"/>
        <dbReference type="ChEBI" id="CHEBI:16526"/>
        <dbReference type="ChEBI" id="CHEBI:57308"/>
        <dbReference type="ChEBI" id="CHEBI:57309"/>
        <dbReference type="EC" id="4.1.1.37"/>
    </reaction>
</comment>
<comment type="pathway">
    <text evidence="1">Porphyrin-containing compound metabolism; protoporphyrin-IX biosynthesis; coproporphyrinogen-III from 5-aminolevulinate: step 4/4.</text>
</comment>
<comment type="subunit">
    <text evidence="1">Homodimer.</text>
</comment>
<comment type="subcellular location">
    <subcellularLocation>
        <location evidence="1">Cytoplasm</location>
    </subcellularLocation>
</comment>
<comment type="similarity">
    <text evidence="1">Belongs to the uroporphyrinogen decarboxylase family.</text>
</comment>
<reference key="1">
    <citation type="submission" date="2006-02" db="EMBL/GenBank/DDBJ databases">
        <title>Complete sequence of chromosome of Jannaschia sp. CCS1.</title>
        <authorList>
            <consortium name="US DOE Joint Genome Institute"/>
            <person name="Copeland A."/>
            <person name="Lucas S."/>
            <person name="Lapidus A."/>
            <person name="Barry K."/>
            <person name="Detter J.C."/>
            <person name="Glavina del Rio T."/>
            <person name="Hammon N."/>
            <person name="Israni S."/>
            <person name="Pitluck S."/>
            <person name="Brettin T."/>
            <person name="Bruce D."/>
            <person name="Han C."/>
            <person name="Tapia R."/>
            <person name="Gilna P."/>
            <person name="Chertkov O."/>
            <person name="Saunders E."/>
            <person name="Schmutz J."/>
            <person name="Larimer F."/>
            <person name="Land M."/>
            <person name="Kyrpides N."/>
            <person name="Lykidis A."/>
            <person name="Moran M.A."/>
            <person name="Belas R."/>
            <person name="Ye W."/>
            <person name="Buchan A."/>
            <person name="Gonzalez J.M."/>
            <person name="Schell M.A."/>
            <person name="Richardson P."/>
        </authorList>
    </citation>
    <scope>NUCLEOTIDE SEQUENCE [LARGE SCALE GENOMIC DNA]</scope>
    <source>
        <strain>CCS1</strain>
    </source>
</reference>
<evidence type="ECO:0000255" key="1">
    <source>
        <dbReference type="HAMAP-Rule" id="MF_00218"/>
    </source>
</evidence>
<keyword id="KW-0963">Cytoplasm</keyword>
<keyword id="KW-0210">Decarboxylase</keyword>
<keyword id="KW-0456">Lyase</keyword>
<keyword id="KW-0627">Porphyrin biosynthesis</keyword>
<keyword id="KW-1185">Reference proteome</keyword>